<reference key="1">
    <citation type="submission" date="2007-03" db="EMBL/GenBank/DDBJ databases">
        <title>Complete sequence of chromosome 1 of Burkholderia vietnamiensis G4.</title>
        <authorList>
            <consortium name="US DOE Joint Genome Institute"/>
            <person name="Copeland A."/>
            <person name="Lucas S."/>
            <person name="Lapidus A."/>
            <person name="Barry K."/>
            <person name="Detter J.C."/>
            <person name="Glavina del Rio T."/>
            <person name="Hammon N."/>
            <person name="Israni S."/>
            <person name="Dalin E."/>
            <person name="Tice H."/>
            <person name="Pitluck S."/>
            <person name="Chain P."/>
            <person name="Malfatti S."/>
            <person name="Shin M."/>
            <person name="Vergez L."/>
            <person name="Schmutz J."/>
            <person name="Larimer F."/>
            <person name="Land M."/>
            <person name="Hauser L."/>
            <person name="Kyrpides N."/>
            <person name="Tiedje J."/>
            <person name="Richardson P."/>
        </authorList>
    </citation>
    <scope>NUCLEOTIDE SEQUENCE [LARGE SCALE GENOMIC DNA]</scope>
    <source>
        <strain>G4 / LMG 22486</strain>
    </source>
</reference>
<evidence type="ECO:0000255" key="1">
    <source>
        <dbReference type="HAMAP-Rule" id="MF_00060"/>
    </source>
</evidence>
<proteinExistence type="inferred from homology"/>
<accession>A4JEQ1</accession>
<keyword id="KW-0963">Cytoplasm</keyword>
<keyword id="KW-0378">Hydrolase</keyword>
<keyword id="KW-0479">Metal-binding</keyword>
<keyword id="KW-0547">Nucleotide-binding</keyword>
<gene>
    <name evidence="1" type="primary">surE</name>
    <name type="ordered locus">Bcep1808_1750</name>
</gene>
<dbReference type="EC" id="3.1.3.5" evidence="1"/>
<dbReference type="EMBL" id="CP000614">
    <property type="protein sequence ID" value="ABO54754.1"/>
    <property type="molecule type" value="Genomic_DNA"/>
</dbReference>
<dbReference type="SMR" id="A4JEQ1"/>
<dbReference type="KEGG" id="bvi:Bcep1808_1750"/>
<dbReference type="eggNOG" id="COG0496">
    <property type="taxonomic scope" value="Bacteria"/>
</dbReference>
<dbReference type="HOGENOM" id="CLU_045192_1_2_4"/>
<dbReference type="Proteomes" id="UP000002287">
    <property type="component" value="Chromosome 1"/>
</dbReference>
<dbReference type="GO" id="GO:0005737">
    <property type="term" value="C:cytoplasm"/>
    <property type="evidence" value="ECO:0007669"/>
    <property type="project" value="UniProtKB-SubCell"/>
</dbReference>
<dbReference type="GO" id="GO:0008254">
    <property type="term" value="F:3'-nucleotidase activity"/>
    <property type="evidence" value="ECO:0007669"/>
    <property type="project" value="TreeGrafter"/>
</dbReference>
<dbReference type="GO" id="GO:0008253">
    <property type="term" value="F:5'-nucleotidase activity"/>
    <property type="evidence" value="ECO:0007669"/>
    <property type="project" value="UniProtKB-UniRule"/>
</dbReference>
<dbReference type="GO" id="GO:0004309">
    <property type="term" value="F:exopolyphosphatase activity"/>
    <property type="evidence" value="ECO:0007669"/>
    <property type="project" value="TreeGrafter"/>
</dbReference>
<dbReference type="GO" id="GO:0046872">
    <property type="term" value="F:metal ion binding"/>
    <property type="evidence" value="ECO:0007669"/>
    <property type="project" value="UniProtKB-UniRule"/>
</dbReference>
<dbReference type="GO" id="GO:0000166">
    <property type="term" value="F:nucleotide binding"/>
    <property type="evidence" value="ECO:0007669"/>
    <property type="project" value="UniProtKB-KW"/>
</dbReference>
<dbReference type="FunFam" id="3.40.1210.10:FF:000001">
    <property type="entry name" value="5'/3'-nucleotidase SurE"/>
    <property type="match status" value="1"/>
</dbReference>
<dbReference type="Gene3D" id="3.40.1210.10">
    <property type="entry name" value="Survival protein SurE-like phosphatase/nucleotidase"/>
    <property type="match status" value="1"/>
</dbReference>
<dbReference type="HAMAP" id="MF_00060">
    <property type="entry name" value="SurE"/>
    <property type="match status" value="1"/>
</dbReference>
<dbReference type="InterPro" id="IPR030048">
    <property type="entry name" value="SurE"/>
</dbReference>
<dbReference type="InterPro" id="IPR002828">
    <property type="entry name" value="SurE-like_Pase/nucleotidase"/>
</dbReference>
<dbReference type="InterPro" id="IPR036523">
    <property type="entry name" value="SurE-like_sf"/>
</dbReference>
<dbReference type="NCBIfam" id="NF001489">
    <property type="entry name" value="PRK00346.1-3"/>
    <property type="match status" value="1"/>
</dbReference>
<dbReference type="NCBIfam" id="NF001490">
    <property type="entry name" value="PRK00346.1-4"/>
    <property type="match status" value="1"/>
</dbReference>
<dbReference type="NCBIfam" id="TIGR00087">
    <property type="entry name" value="surE"/>
    <property type="match status" value="1"/>
</dbReference>
<dbReference type="PANTHER" id="PTHR30457">
    <property type="entry name" value="5'-NUCLEOTIDASE SURE"/>
    <property type="match status" value="1"/>
</dbReference>
<dbReference type="PANTHER" id="PTHR30457:SF12">
    <property type="entry name" value="5'_3'-NUCLEOTIDASE SURE"/>
    <property type="match status" value="1"/>
</dbReference>
<dbReference type="Pfam" id="PF01975">
    <property type="entry name" value="SurE"/>
    <property type="match status" value="1"/>
</dbReference>
<dbReference type="SUPFAM" id="SSF64167">
    <property type="entry name" value="SurE-like"/>
    <property type="match status" value="1"/>
</dbReference>
<protein>
    <recommendedName>
        <fullName evidence="1">5'-nucleotidase SurE</fullName>
        <ecNumber evidence="1">3.1.3.5</ecNumber>
    </recommendedName>
    <alternativeName>
        <fullName evidence="1">Nucleoside 5'-monophosphate phosphohydrolase</fullName>
    </alternativeName>
</protein>
<name>SURE_BURVG</name>
<sequence>MRILLSNDDGYLAPGLAALSDALQPLADVTVIAPEQNCSGASNSLTLSRPLSVQRAANTGFFYVNGTPTDSVHVALTGMADARPDLVVSGINNGQNMGEDTLYSGTVAAATEGIMFGVPAIAFSLADKGWAHLADAARVAAEIVAHYLAHPLPGQPLLNVNIPNLPYDALKGWQVTRLGKRHPSQPVIRQTDPRGEPVYWIGAAGAALDASEGTDFHAIANGFVSITPLQLDLTHTQMLPATRDWARAAGRAS</sequence>
<comment type="function">
    <text evidence="1">Nucleotidase that shows phosphatase activity on nucleoside 5'-monophosphates.</text>
</comment>
<comment type="catalytic activity">
    <reaction evidence="1">
        <text>a ribonucleoside 5'-phosphate + H2O = a ribonucleoside + phosphate</text>
        <dbReference type="Rhea" id="RHEA:12484"/>
        <dbReference type="ChEBI" id="CHEBI:15377"/>
        <dbReference type="ChEBI" id="CHEBI:18254"/>
        <dbReference type="ChEBI" id="CHEBI:43474"/>
        <dbReference type="ChEBI" id="CHEBI:58043"/>
        <dbReference type="EC" id="3.1.3.5"/>
    </reaction>
</comment>
<comment type="cofactor">
    <cofactor evidence="1">
        <name>a divalent metal cation</name>
        <dbReference type="ChEBI" id="CHEBI:60240"/>
    </cofactor>
    <text evidence="1">Binds 1 divalent metal cation per subunit.</text>
</comment>
<comment type="subcellular location">
    <subcellularLocation>
        <location evidence="1">Cytoplasm</location>
    </subcellularLocation>
</comment>
<comment type="similarity">
    <text evidence="1">Belongs to the SurE nucleotidase family.</text>
</comment>
<organism>
    <name type="scientific">Burkholderia vietnamiensis (strain G4 / LMG 22486)</name>
    <name type="common">Burkholderia cepacia (strain R1808)</name>
    <dbReference type="NCBI Taxonomy" id="269482"/>
    <lineage>
        <taxon>Bacteria</taxon>
        <taxon>Pseudomonadati</taxon>
        <taxon>Pseudomonadota</taxon>
        <taxon>Betaproteobacteria</taxon>
        <taxon>Burkholderiales</taxon>
        <taxon>Burkholderiaceae</taxon>
        <taxon>Burkholderia</taxon>
        <taxon>Burkholderia cepacia complex</taxon>
    </lineage>
</organism>
<feature type="chain" id="PRO_1000007711" description="5'-nucleotidase SurE">
    <location>
        <begin position="1"/>
        <end position="253"/>
    </location>
</feature>
<feature type="binding site" evidence="1">
    <location>
        <position position="8"/>
    </location>
    <ligand>
        <name>a divalent metal cation</name>
        <dbReference type="ChEBI" id="CHEBI:60240"/>
    </ligand>
</feature>
<feature type="binding site" evidence="1">
    <location>
        <position position="9"/>
    </location>
    <ligand>
        <name>a divalent metal cation</name>
        <dbReference type="ChEBI" id="CHEBI:60240"/>
    </ligand>
</feature>
<feature type="binding site" evidence="1">
    <location>
        <position position="39"/>
    </location>
    <ligand>
        <name>a divalent metal cation</name>
        <dbReference type="ChEBI" id="CHEBI:60240"/>
    </ligand>
</feature>
<feature type="binding site" evidence="1">
    <location>
        <position position="92"/>
    </location>
    <ligand>
        <name>a divalent metal cation</name>
        <dbReference type="ChEBI" id="CHEBI:60240"/>
    </ligand>
</feature>